<comment type="function">
    <text evidence="1 2">Component of the PEX13-PEX14 docking complex, a translocon channel that specifically mediates the import of peroxisomal cargo proteins bound to PEX5 receptor (By similarity). The PEX13-PEX14 docking complex forms a large import pore which can be opened to a diameter of about 9 nm (By similarity). Mechanistically, PEX5 receptor along with cargo proteins associates with the PEX14 subunit of the PEX13-PEX14 docking complex in the cytosol, leading to the insertion of the receptor into the organelle membrane with the concomitant translocation of the cargo into the peroxisome matrix (By similarity).</text>
</comment>
<comment type="subunit">
    <text evidence="1">Interacts with PEX13; forming the PEX13-PEX14 docking complex. Interacts with PEX5 (via WxxxF/Y motifs).</text>
</comment>
<comment type="subcellular location">
    <subcellularLocation>
        <location evidence="1">Peroxisome membrane</location>
        <topology evidence="3">Single-pass membrane protein</topology>
    </subcellularLocation>
</comment>
<comment type="similarity">
    <text evidence="6">Belongs to the peroxin-14 family.</text>
</comment>
<name>PEX14_DICDI</name>
<evidence type="ECO:0000250" key="1">
    <source>
        <dbReference type="UniProtKB" id="O75381"/>
    </source>
</evidence>
<evidence type="ECO:0000250" key="2">
    <source>
        <dbReference type="UniProtKB" id="P53112"/>
    </source>
</evidence>
<evidence type="ECO:0000250" key="3">
    <source>
        <dbReference type="UniProtKB" id="Q642G4"/>
    </source>
</evidence>
<evidence type="ECO:0000255" key="4"/>
<evidence type="ECO:0000256" key="5">
    <source>
        <dbReference type="SAM" id="MobiDB-lite"/>
    </source>
</evidence>
<evidence type="ECO:0000305" key="6"/>
<protein>
    <recommendedName>
        <fullName>Peroxisomal membrane protein PEX14</fullName>
    </recommendedName>
    <alternativeName>
        <fullName>PTS1 receptor-docking protein</fullName>
    </alternativeName>
    <alternativeName>
        <fullName>Peroxin-14</fullName>
    </alternativeName>
</protein>
<dbReference type="EMBL" id="AAFI02000200">
    <property type="protein sequence ID" value="EAL60831.1"/>
    <property type="molecule type" value="Genomic_DNA"/>
</dbReference>
<dbReference type="RefSeq" id="XP_629211.1">
    <property type="nucleotide sequence ID" value="XM_629209.1"/>
</dbReference>
<dbReference type="SMR" id="Q54C55"/>
<dbReference type="FunCoup" id="Q54C55">
    <property type="interactions" value="419"/>
</dbReference>
<dbReference type="STRING" id="44689.Q54C55"/>
<dbReference type="GlyGen" id="Q54C55">
    <property type="glycosylation" value="1 site"/>
</dbReference>
<dbReference type="PaxDb" id="44689-DDB0238078"/>
<dbReference type="EnsemblProtists" id="EAL60831">
    <property type="protein sequence ID" value="EAL60831"/>
    <property type="gene ID" value="DDB_G0293264"/>
</dbReference>
<dbReference type="GeneID" id="8629090"/>
<dbReference type="KEGG" id="ddi:DDB_G0293264"/>
<dbReference type="dictyBase" id="DDB_G0293264">
    <property type="gene designation" value="pex14"/>
</dbReference>
<dbReference type="VEuPathDB" id="AmoebaDB:DDB_G0293264"/>
<dbReference type="eggNOG" id="ENOG502R97S">
    <property type="taxonomic scope" value="Eukaryota"/>
</dbReference>
<dbReference type="HOGENOM" id="CLU_371912_0_0_1"/>
<dbReference type="InParanoid" id="Q54C55"/>
<dbReference type="OMA" id="NYIMPYF"/>
<dbReference type="Reactome" id="R-DDI-8866654">
    <property type="pathway name" value="E3 ubiquitin ligases ubiquitinate target proteins"/>
</dbReference>
<dbReference type="Reactome" id="R-DDI-9033241">
    <property type="pathway name" value="Peroxisomal protein import"/>
</dbReference>
<dbReference type="Reactome" id="R-DDI-9603798">
    <property type="pathway name" value="Class I peroxisomal membrane protein import"/>
</dbReference>
<dbReference type="PRO" id="PR:Q54C55"/>
<dbReference type="Proteomes" id="UP000002195">
    <property type="component" value="Chromosome 6"/>
</dbReference>
<dbReference type="GO" id="GO:1990429">
    <property type="term" value="C:peroxisomal importomer complex"/>
    <property type="evidence" value="ECO:0000318"/>
    <property type="project" value="GO_Central"/>
</dbReference>
<dbReference type="GO" id="GO:0005778">
    <property type="term" value="C:peroxisomal membrane"/>
    <property type="evidence" value="ECO:0000250"/>
    <property type="project" value="dictyBase"/>
</dbReference>
<dbReference type="GO" id="GO:0005102">
    <property type="term" value="F:signaling receptor binding"/>
    <property type="evidence" value="ECO:0000318"/>
    <property type="project" value="GO_Central"/>
</dbReference>
<dbReference type="GO" id="GO:0016560">
    <property type="term" value="P:protein import into peroxisome matrix, docking"/>
    <property type="evidence" value="ECO:0000318"/>
    <property type="project" value="GO_Central"/>
</dbReference>
<dbReference type="GO" id="GO:0006625">
    <property type="term" value="P:protein targeting to peroxisome"/>
    <property type="evidence" value="ECO:0000250"/>
    <property type="project" value="dictyBase"/>
</dbReference>
<dbReference type="FunFam" id="1.10.10.10:FF:000217">
    <property type="entry name" value="Peroxisomal membrane protein PEX14"/>
    <property type="match status" value="1"/>
</dbReference>
<dbReference type="Gene3D" id="1.10.10.10">
    <property type="entry name" value="Winged helix-like DNA-binding domain superfamily/Winged helix DNA-binding domain"/>
    <property type="match status" value="1"/>
</dbReference>
<dbReference type="InterPro" id="IPR040554">
    <property type="entry name" value="KPWE_PEX14_dom"/>
</dbReference>
<dbReference type="InterPro" id="IPR025655">
    <property type="entry name" value="PEX14"/>
</dbReference>
<dbReference type="InterPro" id="IPR006785">
    <property type="entry name" value="Pex14_N"/>
</dbReference>
<dbReference type="InterPro" id="IPR036388">
    <property type="entry name" value="WH-like_DNA-bd_sf"/>
</dbReference>
<dbReference type="PANTHER" id="PTHR23058">
    <property type="entry name" value="PEROXISOMAL MEMBRANE PROTEIN PEX14"/>
    <property type="match status" value="1"/>
</dbReference>
<dbReference type="PANTHER" id="PTHR23058:SF0">
    <property type="entry name" value="PEROXISOMAL MEMBRANE PROTEIN PEX14"/>
    <property type="match status" value="1"/>
</dbReference>
<dbReference type="Pfam" id="PF17733">
    <property type="entry name" value="KPWE_dom"/>
    <property type="match status" value="1"/>
</dbReference>
<dbReference type="Pfam" id="PF04695">
    <property type="entry name" value="Pex14_N"/>
    <property type="match status" value="1"/>
</dbReference>
<feature type="chain" id="PRO_0000371417" description="Peroxisomal membrane protein PEX14">
    <location>
        <begin position="1"/>
        <end position="748"/>
    </location>
</feature>
<feature type="topological domain" description="Peroxisomal" evidence="6">
    <location>
        <begin position="1"/>
        <end position="277"/>
    </location>
</feature>
<feature type="transmembrane region" description="Helical" evidence="4">
    <location>
        <begin position="278"/>
        <end position="300"/>
    </location>
</feature>
<feature type="topological domain" description="Cytoplasmic" evidence="6">
    <location>
        <begin position="301"/>
        <end position="748"/>
    </location>
</feature>
<feature type="region of interest" description="Disordered" evidence="5">
    <location>
        <begin position="1"/>
        <end position="138"/>
    </location>
</feature>
<feature type="region of interest" description="Disordered" evidence="5">
    <location>
        <begin position="190"/>
        <end position="228"/>
    </location>
</feature>
<feature type="region of interest" description="Disordered" evidence="5">
    <location>
        <begin position="406"/>
        <end position="673"/>
    </location>
</feature>
<feature type="region of interest" description="Disordered" evidence="5">
    <location>
        <begin position="685"/>
        <end position="748"/>
    </location>
</feature>
<feature type="coiled-coil region" evidence="4">
    <location>
        <begin position="8"/>
        <end position="60"/>
    </location>
</feature>
<feature type="coiled-coil region" evidence="4">
    <location>
        <begin position="241"/>
        <end position="277"/>
    </location>
</feature>
<feature type="coiled-coil region" evidence="4">
    <location>
        <begin position="316"/>
        <end position="413"/>
    </location>
</feature>
<feature type="compositionally biased region" description="Low complexity" evidence="5">
    <location>
        <begin position="7"/>
        <end position="30"/>
    </location>
</feature>
<feature type="compositionally biased region" description="Basic and acidic residues" evidence="5">
    <location>
        <begin position="43"/>
        <end position="59"/>
    </location>
</feature>
<feature type="compositionally biased region" description="Polar residues" evidence="5">
    <location>
        <begin position="86"/>
        <end position="104"/>
    </location>
</feature>
<feature type="compositionally biased region" description="Low complexity" evidence="5">
    <location>
        <begin position="122"/>
        <end position="131"/>
    </location>
</feature>
<feature type="compositionally biased region" description="Low complexity" evidence="5">
    <location>
        <begin position="190"/>
        <end position="209"/>
    </location>
</feature>
<feature type="compositionally biased region" description="Low complexity" evidence="5">
    <location>
        <begin position="218"/>
        <end position="228"/>
    </location>
</feature>
<feature type="compositionally biased region" description="Low complexity" evidence="5">
    <location>
        <begin position="409"/>
        <end position="424"/>
    </location>
</feature>
<feature type="compositionally biased region" description="Low complexity" evidence="5">
    <location>
        <begin position="445"/>
        <end position="476"/>
    </location>
</feature>
<feature type="compositionally biased region" description="Polar residues" evidence="5">
    <location>
        <begin position="510"/>
        <end position="527"/>
    </location>
</feature>
<feature type="compositionally biased region" description="Low complexity" evidence="5">
    <location>
        <begin position="528"/>
        <end position="542"/>
    </location>
</feature>
<feature type="compositionally biased region" description="Low complexity" evidence="5">
    <location>
        <begin position="569"/>
        <end position="611"/>
    </location>
</feature>
<feature type="compositionally biased region" description="Polar residues" evidence="5">
    <location>
        <begin position="612"/>
        <end position="627"/>
    </location>
</feature>
<feature type="compositionally biased region" description="Low complexity" evidence="5">
    <location>
        <begin position="628"/>
        <end position="661"/>
    </location>
</feature>
<feature type="compositionally biased region" description="Basic and acidic residues" evidence="5">
    <location>
        <begin position="710"/>
        <end position="723"/>
    </location>
</feature>
<feature type="compositionally biased region" description="Polar residues" evidence="5">
    <location>
        <begin position="724"/>
        <end position="748"/>
    </location>
</feature>
<organism>
    <name type="scientific">Dictyostelium discoideum</name>
    <name type="common">Social amoeba</name>
    <dbReference type="NCBI Taxonomy" id="44689"/>
    <lineage>
        <taxon>Eukaryota</taxon>
        <taxon>Amoebozoa</taxon>
        <taxon>Evosea</taxon>
        <taxon>Eumycetozoa</taxon>
        <taxon>Dictyostelia</taxon>
        <taxon>Dictyosteliales</taxon>
        <taxon>Dictyosteliaceae</taxon>
        <taxon>Dictyostelium</taxon>
    </lineage>
</organism>
<accession>Q54C55</accession>
<sequence>MDNDDINNNNNNNNNNNNNNNSQELDQQEQTQEEITKQRIQKRKEEAKRIMEERKKREQQPPSQRQYEDVEDDQQQQPIRPIKQLPQRQQQYDDNDEPPQQQQYEPKISQRKVPLPPMKQPTTSSTASAATGSILSPSSNFREDMVKKAVLFLNNPNVKNTALARKVAYLEKKGLTSDEVKEALKRVETGNINGSSTNNSNITQSNSISRTRNDNYGNNNNNSSNNNNNIQQQQYYQQQQQQHQQQQQMALTQIQSYQKRLEADDQRIAQLMMNNNRFSWNSFLFSVTAIVGAASGLAYLTSNYIIPFLNGGKTNKDASANMDKKITSLQEEIIKLQSTIIQQGNDFRESTKSLKTLIEQQQQQILQQQQINSVSTTTNSATSASNSSEIVEIKKELKNLINLIGNKENSNNSNNNSNNSNNNNGYSKYNGFNGVYNKSSYDDVSTNNNNKTNSPPSPNKPTTTTTTTATSTPGSNISNTNKTLPPIIKTNPYSHLSWKLPTDQPPVIPSWQQKSSNPPSDLSNANDKSSPSNSNPSTPTKPYQSSFNYGDVNSFVGGSNTLNFDEKPTTTTTTSTTPSNERPSSPSVNNNNNNNNNNNNNNNNNNNNNNNTTIASTSNESNNSKVETTSNDSDKSTSPSSSSNNTTSTTATTTTITSASTEDNKQQSDETPYSSDFLDVINQLKQGKTPPGIRTDIDDKPLENSTVTKSAKERPKKPWERDTLTSVTNNLSVEETQTINNTDSSVEK</sequence>
<keyword id="KW-0175">Coiled coil</keyword>
<keyword id="KW-0472">Membrane</keyword>
<keyword id="KW-0576">Peroxisome</keyword>
<keyword id="KW-0653">Protein transport</keyword>
<keyword id="KW-1185">Reference proteome</keyword>
<keyword id="KW-0811">Translocation</keyword>
<keyword id="KW-0812">Transmembrane</keyword>
<keyword id="KW-1133">Transmembrane helix</keyword>
<keyword id="KW-0813">Transport</keyword>
<reference key="1">
    <citation type="journal article" date="2005" name="Nature">
        <title>The genome of the social amoeba Dictyostelium discoideum.</title>
        <authorList>
            <person name="Eichinger L."/>
            <person name="Pachebat J.A."/>
            <person name="Gloeckner G."/>
            <person name="Rajandream M.A."/>
            <person name="Sucgang R."/>
            <person name="Berriman M."/>
            <person name="Song J."/>
            <person name="Olsen R."/>
            <person name="Szafranski K."/>
            <person name="Xu Q."/>
            <person name="Tunggal B."/>
            <person name="Kummerfeld S."/>
            <person name="Madera M."/>
            <person name="Konfortov B.A."/>
            <person name="Rivero F."/>
            <person name="Bankier A.T."/>
            <person name="Lehmann R."/>
            <person name="Hamlin N."/>
            <person name="Davies R."/>
            <person name="Gaudet P."/>
            <person name="Fey P."/>
            <person name="Pilcher K."/>
            <person name="Chen G."/>
            <person name="Saunders D."/>
            <person name="Sodergren E.J."/>
            <person name="Davis P."/>
            <person name="Kerhornou A."/>
            <person name="Nie X."/>
            <person name="Hall N."/>
            <person name="Anjard C."/>
            <person name="Hemphill L."/>
            <person name="Bason N."/>
            <person name="Farbrother P."/>
            <person name="Desany B."/>
            <person name="Just E."/>
            <person name="Morio T."/>
            <person name="Rost R."/>
            <person name="Churcher C.M."/>
            <person name="Cooper J."/>
            <person name="Haydock S."/>
            <person name="van Driessche N."/>
            <person name="Cronin A."/>
            <person name="Goodhead I."/>
            <person name="Muzny D.M."/>
            <person name="Mourier T."/>
            <person name="Pain A."/>
            <person name="Lu M."/>
            <person name="Harper D."/>
            <person name="Lindsay R."/>
            <person name="Hauser H."/>
            <person name="James K.D."/>
            <person name="Quiles M."/>
            <person name="Madan Babu M."/>
            <person name="Saito T."/>
            <person name="Buchrieser C."/>
            <person name="Wardroper A."/>
            <person name="Felder M."/>
            <person name="Thangavelu M."/>
            <person name="Johnson D."/>
            <person name="Knights A."/>
            <person name="Loulseged H."/>
            <person name="Mungall K.L."/>
            <person name="Oliver K."/>
            <person name="Price C."/>
            <person name="Quail M.A."/>
            <person name="Urushihara H."/>
            <person name="Hernandez J."/>
            <person name="Rabbinowitsch E."/>
            <person name="Steffen D."/>
            <person name="Sanders M."/>
            <person name="Ma J."/>
            <person name="Kohara Y."/>
            <person name="Sharp S."/>
            <person name="Simmonds M.N."/>
            <person name="Spiegler S."/>
            <person name="Tivey A."/>
            <person name="Sugano S."/>
            <person name="White B."/>
            <person name="Walker D."/>
            <person name="Woodward J.R."/>
            <person name="Winckler T."/>
            <person name="Tanaka Y."/>
            <person name="Shaulsky G."/>
            <person name="Schleicher M."/>
            <person name="Weinstock G.M."/>
            <person name="Rosenthal A."/>
            <person name="Cox E.C."/>
            <person name="Chisholm R.L."/>
            <person name="Gibbs R.A."/>
            <person name="Loomis W.F."/>
            <person name="Platzer M."/>
            <person name="Kay R.R."/>
            <person name="Williams J.G."/>
            <person name="Dear P.H."/>
            <person name="Noegel A.A."/>
            <person name="Barrell B.G."/>
            <person name="Kuspa A."/>
        </authorList>
    </citation>
    <scope>NUCLEOTIDE SEQUENCE [LARGE SCALE GENOMIC DNA]</scope>
    <source>
        <strain>AX4</strain>
    </source>
</reference>
<gene>
    <name type="primary">pex14</name>
    <name type="ORF">DDB_G0293264</name>
</gene>
<proteinExistence type="inferred from homology"/>